<accession>Q7XTS3</accession>
<accession>Q0JA51</accession>
<comment type="function">
    <text evidence="1">Probably involved in the RNA silencing pathway. May bind to short RNAs such as microRNAs (miRNAs) or short interfering RNAs (siRNAs), and represses the translation of mRNAs which are complementary to them (By similarity).</text>
</comment>
<comment type="similarity">
    <text evidence="5">Belongs to the argonaute family. Ago subfamily.</text>
</comment>
<comment type="sequence caution" evidence="5">
    <conflict type="erroneous gene model prediction">
        <sequence resource="EMBL-CDS" id="BAF15786"/>
    </conflict>
</comment>
<evidence type="ECO:0000250" key="1"/>
<evidence type="ECO:0000255" key="2">
    <source>
        <dbReference type="PROSITE-ProRule" id="PRU00142"/>
    </source>
</evidence>
<evidence type="ECO:0000255" key="3">
    <source>
        <dbReference type="PROSITE-ProRule" id="PRU00150"/>
    </source>
</evidence>
<evidence type="ECO:0000256" key="4">
    <source>
        <dbReference type="SAM" id="MobiDB-lite"/>
    </source>
</evidence>
<evidence type="ECO:0000305" key="5"/>
<name>AGO3_ORYSJ</name>
<keyword id="KW-1185">Reference proteome</keyword>
<keyword id="KW-0943">RNA-mediated gene silencing</keyword>
<reference key="1">
    <citation type="journal article" date="2002" name="Nature">
        <title>Sequence and analysis of rice chromosome 4.</title>
        <authorList>
            <person name="Feng Q."/>
            <person name="Zhang Y."/>
            <person name="Hao P."/>
            <person name="Wang S."/>
            <person name="Fu G."/>
            <person name="Huang Y."/>
            <person name="Li Y."/>
            <person name="Zhu J."/>
            <person name="Liu Y."/>
            <person name="Hu X."/>
            <person name="Jia P."/>
            <person name="Zhang Y."/>
            <person name="Zhao Q."/>
            <person name="Ying K."/>
            <person name="Yu S."/>
            <person name="Tang Y."/>
            <person name="Weng Q."/>
            <person name="Zhang L."/>
            <person name="Lu Y."/>
            <person name="Mu J."/>
            <person name="Lu Y."/>
            <person name="Zhang L.S."/>
            <person name="Yu Z."/>
            <person name="Fan D."/>
            <person name="Liu X."/>
            <person name="Lu T."/>
            <person name="Li C."/>
            <person name="Wu Y."/>
            <person name="Sun T."/>
            <person name="Lei H."/>
            <person name="Li T."/>
            <person name="Hu H."/>
            <person name="Guan J."/>
            <person name="Wu M."/>
            <person name="Zhang R."/>
            <person name="Zhou B."/>
            <person name="Chen Z."/>
            <person name="Chen L."/>
            <person name="Jin Z."/>
            <person name="Wang R."/>
            <person name="Yin H."/>
            <person name="Cai Z."/>
            <person name="Ren S."/>
            <person name="Lv G."/>
            <person name="Gu W."/>
            <person name="Zhu G."/>
            <person name="Tu Y."/>
            <person name="Jia J."/>
            <person name="Zhang Y."/>
            <person name="Chen J."/>
            <person name="Kang H."/>
            <person name="Chen X."/>
            <person name="Shao C."/>
            <person name="Sun Y."/>
            <person name="Hu Q."/>
            <person name="Zhang X."/>
            <person name="Zhang W."/>
            <person name="Wang L."/>
            <person name="Ding C."/>
            <person name="Sheng H."/>
            <person name="Gu J."/>
            <person name="Chen S."/>
            <person name="Ni L."/>
            <person name="Zhu F."/>
            <person name="Chen W."/>
            <person name="Lan L."/>
            <person name="Lai Y."/>
            <person name="Cheng Z."/>
            <person name="Gu M."/>
            <person name="Jiang J."/>
            <person name="Li J."/>
            <person name="Hong G."/>
            <person name="Xue Y."/>
            <person name="Han B."/>
        </authorList>
    </citation>
    <scope>NUCLEOTIDE SEQUENCE [LARGE SCALE GENOMIC DNA]</scope>
    <source>
        <strain>cv. Nipponbare</strain>
    </source>
</reference>
<reference key="2">
    <citation type="journal article" date="2005" name="Nature">
        <title>The map-based sequence of the rice genome.</title>
        <authorList>
            <consortium name="International rice genome sequencing project (IRGSP)"/>
        </authorList>
    </citation>
    <scope>NUCLEOTIDE SEQUENCE [LARGE SCALE GENOMIC DNA]</scope>
    <source>
        <strain>cv. Nipponbare</strain>
    </source>
</reference>
<reference key="3">
    <citation type="journal article" date="2008" name="Nucleic Acids Res.">
        <title>The rice annotation project database (RAP-DB): 2008 update.</title>
        <authorList>
            <consortium name="The rice annotation project (RAP)"/>
        </authorList>
    </citation>
    <scope>GENOME REANNOTATION</scope>
    <source>
        <strain>cv. Nipponbare</strain>
    </source>
</reference>
<reference key="4">
    <citation type="journal article" date="2013" name="Rice">
        <title>Improvement of the Oryza sativa Nipponbare reference genome using next generation sequence and optical map data.</title>
        <authorList>
            <person name="Kawahara Y."/>
            <person name="de la Bastide M."/>
            <person name="Hamilton J.P."/>
            <person name="Kanamori H."/>
            <person name="McCombie W.R."/>
            <person name="Ouyang S."/>
            <person name="Schwartz D.C."/>
            <person name="Tanaka T."/>
            <person name="Wu J."/>
            <person name="Zhou S."/>
            <person name="Childs K.L."/>
            <person name="Davidson R.M."/>
            <person name="Lin H."/>
            <person name="Quesada-Ocampo L."/>
            <person name="Vaillancourt B."/>
            <person name="Sakai H."/>
            <person name="Lee S.S."/>
            <person name="Kim J."/>
            <person name="Numa H."/>
            <person name="Itoh T."/>
            <person name="Buell C.R."/>
            <person name="Matsumoto T."/>
        </authorList>
    </citation>
    <scope>GENOME REANNOTATION</scope>
    <source>
        <strain>cv. Nipponbare</strain>
    </source>
</reference>
<reference key="5">
    <citation type="journal article" date="2003" name="Science">
        <title>Collection, mapping, and annotation of over 28,000 cDNA clones from japonica rice.</title>
        <authorList>
            <consortium name="The rice full-length cDNA consortium"/>
        </authorList>
    </citation>
    <scope>NUCLEOTIDE SEQUENCE [LARGE SCALE MRNA] OF 587-1109</scope>
    <source>
        <strain>cv. Nipponbare</strain>
    </source>
</reference>
<reference key="6">
    <citation type="journal article" date="2008" name="BMC Genomics">
        <title>Genome-wide identification, organization and phylogenetic analysis of dicer-like, argonaute and RNA-dependent RNA polymerase gene families and their expression analysis during reproductive development and stress in rice.</title>
        <authorList>
            <person name="Kapoor M."/>
            <person name="Arora R."/>
            <person name="Lama T."/>
            <person name="Nijhawan A."/>
            <person name="Khurana J.P."/>
            <person name="Tyagi A.K."/>
            <person name="Kapoor S."/>
        </authorList>
    </citation>
    <scope>GENE FAMILY</scope>
    <scope>NOMENCLATURE</scope>
</reference>
<gene>
    <name type="primary">AGO3</name>
    <name type="ordered locus">Os04g0615800</name>
    <name type="ordered locus">LOC_Os04g52550</name>
    <name type="ORF">OSJNBa0008M17.12</name>
</gene>
<organism>
    <name type="scientific">Oryza sativa subsp. japonica</name>
    <name type="common">Rice</name>
    <dbReference type="NCBI Taxonomy" id="39947"/>
    <lineage>
        <taxon>Eukaryota</taxon>
        <taxon>Viridiplantae</taxon>
        <taxon>Streptophyta</taxon>
        <taxon>Embryophyta</taxon>
        <taxon>Tracheophyta</taxon>
        <taxon>Spermatophyta</taxon>
        <taxon>Magnoliopsida</taxon>
        <taxon>Liliopsida</taxon>
        <taxon>Poales</taxon>
        <taxon>Poaceae</taxon>
        <taxon>BOP clade</taxon>
        <taxon>Oryzoideae</taxon>
        <taxon>Oryzeae</taxon>
        <taxon>Oryzinae</taxon>
        <taxon>Oryza</taxon>
        <taxon>Oryza sativa</taxon>
    </lineage>
</organism>
<feature type="chain" id="PRO_0000378430" description="Protein argonaute 3">
    <location>
        <begin position="1"/>
        <end position="1109"/>
    </location>
</feature>
<feature type="domain" description="PAZ" evidence="2">
    <location>
        <begin position="411"/>
        <end position="521"/>
    </location>
</feature>
<feature type="domain" description="Piwi" evidence="3">
    <location>
        <begin position="720"/>
        <end position="1023"/>
    </location>
</feature>
<feature type="region of interest" description="Disordered" evidence="4">
    <location>
        <begin position="1"/>
        <end position="83"/>
    </location>
</feature>
<feature type="region of interest" description="Disordered" evidence="4">
    <location>
        <begin position="125"/>
        <end position="220"/>
    </location>
</feature>
<feature type="region of interest" description="Disordered" evidence="4">
    <location>
        <begin position="527"/>
        <end position="548"/>
    </location>
</feature>
<feature type="compositionally biased region" description="Basic and acidic residues" evidence="4">
    <location>
        <begin position="1"/>
        <end position="13"/>
    </location>
</feature>
<feature type="compositionally biased region" description="Gly residues" evidence="4">
    <location>
        <begin position="14"/>
        <end position="30"/>
    </location>
</feature>
<feature type="compositionally biased region" description="Gly residues" evidence="4">
    <location>
        <begin position="37"/>
        <end position="54"/>
    </location>
</feature>
<feature type="compositionally biased region" description="Gly residues" evidence="4">
    <location>
        <begin position="62"/>
        <end position="83"/>
    </location>
</feature>
<feature type="compositionally biased region" description="Basic and acidic residues" evidence="4">
    <location>
        <begin position="125"/>
        <end position="134"/>
    </location>
</feature>
<feature type="compositionally biased region" description="Basic residues" evidence="4">
    <location>
        <begin position="135"/>
        <end position="161"/>
    </location>
</feature>
<feature type="compositionally biased region" description="Basic and acidic residues" evidence="4">
    <location>
        <begin position="527"/>
        <end position="545"/>
    </location>
</feature>
<feature type="sequence conflict" description="In Ref. 5; AK107521." evidence="5" ref="5">
    <original>S</original>
    <variation>C</variation>
    <location>
        <position position="825"/>
    </location>
</feature>
<feature type="sequence conflict" description="In Ref. 5; AK107521." evidence="5" ref="5">
    <original>P</original>
    <variation>A</variation>
    <location>
        <position position="1096"/>
    </location>
</feature>
<proteinExistence type="evidence at transcript level"/>
<protein>
    <recommendedName>
        <fullName>Protein argonaute 3</fullName>
        <shortName>OsAGO3</shortName>
    </recommendedName>
</protein>
<sequence length="1109" mass="122753">MAGRGGRDPRRGYDGGYGYPRGGGGQGGTNRGRDGQRGGGRNGPRGGRFPGGRGVEPRRGGDVLGGGQGGGRGTTAGAGGLVRGGSELAVGAELRRRVPTCHVNDFPELGIGGTPVLVRRWRPRDHRDQHDHQSQRHHHRHHHHQRQRHHHHHQRQQRRGSRTRDPRVRRGPLRIPYGEDEKEEPPATPIASSNKNKREEPPTKHRPMARPPGGGGPLSKGEVKLLVNHFSVDYPKESTFFHYEIRIKLGDGPNRKLSKAELLTVKNELFEHESLQELSSAVAYDGERNLYTCAELPEDCIVPVSKFRVKDSSRTYIVSVKLKKPLPLSQLLEQRPGPRDVMQGLDVIVREASSFGKIVLGQGFYPQSGSEAISDSNIVALKGTQQSLKCTQKGLILCVDYSVLPCWKAGSVLDLVKTMKFMEYPLLEDQLKKLNNALKGLCVTVSHRKTEEKYTVKGLTDKPADQITFKDSKSGQTTKLIEYYKETYKKEIEHPMLPCLDLSKSKSKQNYVPIEFCNIPEGERYPVARLDDKKSDNKGEQEKPSTKTTLRKISIKVASSRKEEILDLVGNAQDGPCRGKIAQRFRISLDAAMMEVTGRILAPPTLELGTGTSRGQTFKFTIHQDDCQWNWKLKKYDKRVVAHGGTLNCWGVVDFSEGDLESKFIDKVVRKCSALGMVMTRKPCYEHVSNMEVLSDPKSLRDALIEAKRAAEEEDKKLQLLFCPMLNRCHGYKTLKLMCETELGIQTQCFLSTAAKLDEKRQDQYITNLALKINGKIGGSNMQLDPDSIPVVSAKDFMFIGADVNHPPPGNVSKDIPSIAAVVASVDKGASKYVTRIRAQYHRCEMIQNLGDICKELIGAYEKVNKKKPDSIIYFRDGVSDGQFDMVLNEELADMENKIMVGDYPKITVIVAKKRHHTRLFPKDRNQRQTKNGNVLPGTVVDTDVVDPTAYDFYLCSHKGEVGTSRPTHYYSLLDEHGFASDDLQKLVYNLCFVFARCTKPVSLATPVYYADLAAYRGRLYYEGMMMLQPAASAASASEAMMPAAQPQAAAAAAAAASPSSSAASSSEGMTASQPQAPAAEAASSSAGAADFRELPPMHGDLLNNMFFL</sequence>
<dbReference type="EMBL" id="AL662950">
    <property type="protein sequence ID" value="CAD41796.2"/>
    <property type="molecule type" value="Genomic_DNA"/>
</dbReference>
<dbReference type="EMBL" id="AP008210">
    <property type="protein sequence ID" value="BAF15786.2"/>
    <property type="status" value="ALT_SEQ"/>
    <property type="molecule type" value="Genomic_DNA"/>
</dbReference>
<dbReference type="EMBL" id="AP014960">
    <property type="status" value="NOT_ANNOTATED_CDS"/>
    <property type="molecule type" value="Genomic_DNA"/>
</dbReference>
<dbReference type="EMBL" id="AK107521">
    <property type="status" value="NOT_ANNOTATED_CDS"/>
    <property type="molecule type" value="mRNA"/>
</dbReference>
<dbReference type="SMR" id="Q7XTS3"/>
<dbReference type="FunCoup" id="Q7XTS3">
    <property type="interactions" value="55"/>
</dbReference>
<dbReference type="STRING" id="39947.Q7XTS3"/>
<dbReference type="PaxDb" id="39947-Q7XTS3"/>
<dbReference type="KEGG" id="dosa:Os04g0615800"/>
<dbReference type="eggNOG" id="KOG1041">
    <property type="taxonomic scope" value="Eukaryota"/>
</dbReference>
<dbReference type="HOGENOM" id="CLU_004544_6_2_1"/>
<dbReference type="InParanoid" id="Q7XTS3"/>
<dbReference type="Proteomes" id="UP000000763">
    <property type="component" value="Chromosome 4"/>
</dbReference>
<dbReference type="Proteomes" id="UP000059680">
    <property type="component" value="Chromosome 4"/>
</dbReference>
<dbReference type="GO" id="GO:0005737">
    <property type="term" value="C:cytoplasm"/>
    <property type="evidence" value="ECO:0000318"/>
    <property type="project" value="GO_Central"/>
</dbReference>
<dbReference type="GO" id="GO:0005634">
    <property type="term" value="C:nucleus"/>
    <property type="evidence" value="ECO:0000318"/>
    <property type="project" value="GO_Central"/>
</dbReference>
<dbReference type="GO" id="GO:0003723">
    <property type="term" value="F:RNA binding"/>
    <property type="evidence" value="ECO:0000318"/>
    <property type="project" value="GO_Central"/>
</dbReference>
<dbReference type="GO" id="GO:0004521">
    <property type="term" value="F:RNA endonuclease activity"/>
    <property type="evidence" value="ECO:0000318"/>
    <property type="project" value="GO_Central"/>
</dbReference>
<dbReference type="GO" id="GO:0031047">
    <property type="term" value="P:regulatory ncRNA-mediated gene silencing"/>
    <property type="evidence" value="ECO:0000318"/>
    <property type="project" value="GO_Central"/>
</dbReference>
<dbReference type="CDD" id="cd02846">
    <property type="entry name" value="PAZ_argonaute_like"/>
    <property type="match status" value="1"/>
</dbReference>
<dbReference type="CDD" id="cd04657">
    <property type="entry name" value="Piwi_ago-like"/>
    <property type="match status" value="1"/>
</dbReference>
<dbReference type="Gene3D" id="3.40.50.2300">
    <property type="match status" value="1"/>
</dbReference>
<dbReference type="Gene3D" id="2.170.260.10">
    <property type="entry name" value="paz domain"/>
    <property type="match status" value="1"/>
</dbReference>
<dbReference type="Gene3D" id="3.30.420.10">
    <property type="entry name" value="Ribonuclease H-like superfamily/Ribonuclease H"/>
    <property type="match status" value="1"/>
</dbReference>
<dbReference type="InterPro" id="IPR014811">
    <property type="entry name" value="ArgoL1"/>
</dbReference>
<dbReference type="InterPro" id="IPR032474">
    <property type="entry name" value="Argonaute_N"/>
</dbReference>
<dbReference type="InterPro" id="IPR003100">
    <property type="entry name" value="PAZ_dom"/>
</dbReference>
<dbReference type="InterPro" id="IPR036085">
    <property type="entry name" value="PAZ_dom_sf"/>
</dbReference>
<dbReference type="InterPro" id="IPR003165">
    <property type="entry name" value="Piwi"/>
</dbReference>
<dbReference type="InterPro" id="IPR045246">
    <property type="entry name" value="Piwi_ago-like"/>
</dbReference>
<dbReference type="InterPro" id="IPR012337">
    <property type="entry name" value="RNaseH-like_sf"/>
</dbReference>
<dbReference type="InterPro" id="IPR036397">
    <property type="entry name" value="RNaseH_sf"/>
</dbReference>
<dbReference type="PANTHER" id="PTHR22891">
    <property type="entry name" value="EUKARYOTIC TRANSLATION INITIATION FACTOR 2C"/>
    <property type="match status" value="1"/>
</dbReference>
<dbReference type="Pfam" id="PF08699">
    <property type="entry name" value="ArgoL1"/>
    <property type="match status" value="1"/>
</dbReference>
<dbReference type="Pfam" id="PF16486">
    <property type="entry name" value="ArgoN"/>
    <property type="match status" value="1"/>
</dbReference>
<dbReference type="Pfam" id="PF02170">
    <property type="entry name" value="PAZ"/>
    <property type="match status" value="1"/>
</dbReference>
<dbReference type="Pfam" id="PF02171">
    <property type="entry name" value="Piwi"/>
    <property type="match status" value="1"/>
</dbReference>
<dbReference type="SMART" id="SM01163">
    <property type="entry name" value="DUF1785"/>
    <property type="match status" value="1"/>
</dbReference>
<dbReference type="SMART" id="SM00950">
    <property type="entry name" value="Piwi"/>
    <property type="match status" value="1"/>
</dbReference>
<dbReference type="SUPFAM" id="SSF101690">
    <property type="entry name" value="PAZ domain"/>
    <property type="match status" value="1"/>
</dbReference>
<dbReference type="SUPFAM" id="SSF53098">
    <property type="entry name" value="Ribonuclease H-like"/>
    <property type="match status" value="1"/>
</dbReference>
<dbReference type="PROSITE" id="PS50821">
    <property type="entry name" value="PAZ"/>
    <property type="match status" value="1"/>
</dbReference>
<dbReference type="PROSITE" id="PS50822">
    <property type="entry name" value="PIWI"/>
    <property type="match status" value="1"/>
</dbReference>